<sequence length="562" mass="60455">MNINVANLLNGNYILLLFVVLSLGLCLGKLRLGPVQLGNSIGVLVVSLLLGQQHFSINTEALSLGFMLFIFCVGVEAGPNFFSIFFRDGKNYFMLALVMVGSAMLLALGLGKFFGWGIGLTAGMLAGSMTSTPVLVGAGDTLRNTASMGSQLGIEQDHLSLGYALTYLVGLVSLIFGARYLPKLQHQDLPTSAQQIARERGLDADSQRKVYLPVIRAYRVGPELVDWAAGKNLRELGIYRQTGCYIERIRRNGILASPDGDAVLQIGDEIALVGYPDSHSRLNSNFRDGKEVFDRDLLDMRIVTEEIVVKNHNAVGKRLSQLKLTDHGCFLNRIVRSQIEMPIDDSVVLNKGDVLQVSGDARRVKSIADRIGFISIHSQVTDLLAFCAFFVIGIMVGLITIQFSNFTFGIGNAAGLLFAGIMLGFLRANHPTFGYIPQGALNMVKEFGLMVFMAGVGLSAGSTINSSLGEVGIQMLASGLIVSLVPVVICFLFGAYVLKMNRALLFGAMMGARTCAPAMDIISDTARSNIPALGYAGTYAIANVLLTLAGSLIVIIWPELPG</sequence>
<feature type="chain" id="PRO_1000213240" description="Putative transport protein PC1_1686">
    <location>
        <begin position="1"/>
        <end position="562"/>
    </location>
</feature>
<feature type="transmembrane region" description="Helical" evidence="1">
    <location>
        <begin position="8"/>
        <end position="28"/>
    </location>
</feature>
<feature type="transmembrane region" description="Helical" evidence="1">
    <location>
        <begin position="32"/>
        <end position="52"/>
    </location>
</feature>
<feature type="transmembrane region" description="Helical" evidence="1">
    <location>
        <begin position="66"/>
        <end position="86"/>
    </location>
</feature>
<feature type="transmembrane region" description="Helical" evidence="1">
    <location>
        <begin position="93"/>
        <end position="113"/>
    </location>
</feature>
<feature type="transmembrane region" description="Helical" evidence="1">
    <location>
        <begin position="116"/>
        <end position="136"/>
    </location>
</feature>
<feature type="transmembrane region" description="Helical" evidence="1">
    <location>
        <begin position="158"/>
        <end position="178"/>
    </location>
</feature>
<feature type="transmembrane region" description="Helical" evidence="1">
    <location>
        <begin position="383"/>
        <end position="403"/>
    </location>
</feature>
<feature type="transmembrane region" description="Helical" evidence="1">
    <location>
        <begin position="406"/>
        <end position="426"/>
    </location>
</feature>
<feature type="transmembrane region" description="Helical" evidence="1">
    <location>
        <begin position="447"/>
        <end position="467"/>
    </location>
</feature>
<feature type="transmembrane region" description="Helical" evidence="1">
    <location>
        <begin position="478"/>
        <end position="498"/>
    </location>
</feature>
<feature type="transmembrane region" description="Helical" evidence="1">
    <location>
        <begin position="537"/>
        <end position="557"/>
    </location>
</feature>
<feature type="domain" description="RCK C-terminal 1" evidence="1">
    <location>
        <begin position="202"/>
        <end position="288"/>
    </location>
</feature>
<feature type="domain" description="RCK C-terminal 2" evidence="1">
    <location>
        <begin position="292"/>
        <end position="373"/>
    </location>
</feature>
<gene>
    <name type="ordered locus">PC1_1686</name>
</gene>
<proteinExistence type="inferred from homology"/>
<protein>
    <recommendedName>
        <fullName evidence="1">Putative transport protein PC1_1686</fullName>
    </recommendedName>
</protein>
<evidence type="ECO:0000255" key="1">
    <source>
        <dbReference type="HAMAP-Rule" id="MF_01015"/>
    </source>
</evidence>
<reference key="1">
    <citation type="submission" date="2009-07" db="EMBL/GenBank/DDBJ databases">
        <title>Complete sequence of Pectobacterium carotovorum subsp. carotovorum PC1.</title>
        <authorList>
            <consortium name="US DOE Joint Genome Institute"/>
            <person name="Lucas S."/>
            <person name="Copeland A."/>
            <person name="Lapidus A."/>
            <person name="Glavina del Rio T."/>
            <person name="Tice H."/>
            <person name="Bruce D."/>
            <person name="Goodwin L."/>
            <person name="Pitluck S."/>
            <person name="Munk A.C."/>
            <person name="Brettin T."/>
            <person name="Detter J.C."/>
            <person name="Han C."/>
            <person name="Tapia R."/>
            <person name="Larimer F."/>
            <person name="Land M."/>
            <person name="Hauser L."/>
            <person name="Kyrpides N."/>
            <person name="Mikhailova N."/>
            <person name="Balakrishnan V."/>
            <person name="Glasner J."/>
            <person name="Perna N.T."/>
        </authorList>
    </citation>
    <scope>NUCLEOTIDE SEQUENCE [LARGE SCALE GENOMIC DNA]</scope>
    <source>
        <strain>PC1</strain>
    </source>
</reference>
<accession>C6DEP2</accession>
<name>Y1686_PECCP</name>
<comment type="subcellular location">
    <subcellularLocation>
        <location evidence="1">Cell membrane</location>
        <topology evidence="1">Multi-pass membrane protein</topology>
    </subcellularLocation>
</comment>
<comment type="similarity">
    <text evidence="1">Belongs to the AAE transporter (TC 2.A.81) family. YbjL subfamily.</text>
</comment>
<organism>
    <name type="scientific">Pectobacterium carotovorum subsp. carotovorum (strain PC1)</name>
    <dbReference type="NCBI Taxonomy" id="561230"/>
    <lineage>
        <taxon>Bacteria</taxon>
        <taxon>Pseudomonadati</taxon>
        <taxon>Pseudomonadota</taxon>
        <taxon>Gammaproteobacteria</taxon>
        <taxon>Enterobacterales</taxon>
        <taxon>Pectobacteriaceae</taxon>
        <taxon>Pectobacterium</taxon>
    </lineage>
</organism>
<keyword id="KW-1003">Cell membrane</keyword>
<keyword id="KW-0472">Membrane</keyword>
<keyword id="KW-0677">Repeat</keyword>
<keyword id="KW-0812">Transmembrane</keyword>
<keyword id="KW-1133">Transmembrane helix</keyword>
<keyword id="KW-0813">Transport</keyword>
<dbReference type="EMBL" id="CP001657">
    <property type="protein sequence ID" value="ACT12727.1"/>
    <property type="molecule type" value="Genomic_DNA"/>
</dbReference>
<dbReference type="RefSeq" id="WP_015839945.1">
    <property type="nucleotide sequence ID" value="NC_012917.1"/>
</dbReference>
<dbReference type="SMR" id="C6DEP2"/>
<dbReference type="STRING" id="561230.PC1_1686"/>
<dbReference type="KEGG" id="pct:PC1_1686"/>
<dbReference type="eggNOG" id="COG0569">
    <property type="taxonomic scope" value="Bacteria"/>
</dbReference>
<dbReference type="eggNOG" id="COG2985">
    <property type="taxonomic scope" value="Bacteria"/>
</dbReference>
<dbReference type="HOGENOM" id="CLU_035023_2_2_6"/>
<dbReference type="OrthoDB" id="5166626at2"/>
<dbReference type="Proteomes" id="UP000002736">
    <property type="component" value="Chromosome"/>
</dbReference>
<dbReference type="GO" id="GO:0005886">
    <property type="term" value="C:plasma membrane"/>
    <property type="evidence" value="ECO:0007669"/>
    <property type="project" value="UniProtKB-SubCell"/>
</dbReference>
<dbReference type="GO" id="GO:0008324">
    <property type="term" value="F:monoatomic cation transmembrane transporter activity"/>
    <property type="evidence" value="ECO:0007669"/>
    <property type="project" value="InterPro"/>
</dbReference>
<dbReference type="GO" id="GO:0006813">
    <property type="term" value="P:potassium ion transport"/>
    <property type="evidence" value="ECO:0007669"/>
    <property type="project" value="InterPro"/>
</dbReference>
<dbReference type="Gene3D" id="3.30.70.1450">
    <property type="entry name" value="Regulator of K+ conductance, C-terminal domain"/>
    <property type="match status" value="2"/>
</dbReference>
<dbReference type="HAMAP" id="MF_01015">
    <property type="entry name" value="YbjL"/>
    <property type="match status" value="1"/>
</dbReference>
<dbReference type="InterPro" id="IPR050144">
    <property type="entry name" value="AAE_transporter"/>
</dbReference>
<dbReference type="InterPro" id="IPR006037">
    <property type="entry name" value="RCK_C"/>
</dbReference>
<dbReference type="InterPro" id="IPR036721">
    <property type="entry name" value="RCK_C_sf"/>
</dbReference>
<dbReference type="InterPro" id="IPR023017">
    <property type="entry name" value="Transp_YbjL_put"/>
</dbReference>
<dbReference type="InterPro" id="IPR006512">
    <property type="entry name" value="YidE_YbjL"/>
</dbReference>
<dbReference type="NCBIfam" id="NF003440">
    <property type="entry name" value="PRK04972.1"/>
    <property type="match status" value="1"/>
</dbReference>
<dbReference type="NCBIfam" id="TIGR01625">
    <property type="entry name" value="YidE_YbjL_dupl"/>
    <property type="match status" value="2"/>
</dbReference>
<dbReference type="PANTHER" id="PTHR30445">
    <property type="entry name" value="K(+)_H(+) ANTIPORTER SUBUNIT KHTT"/>
    <property type="match status" value="1"/>
</dbReference>
<dbReference type="PANTHER" id="PTHR30445:SF10">
    <property type="entry name" value="TRANSPORT PROTEIN YBJL-RELATED"/>
    <property type="match status" value="1"/>
</dbReference>
<dbReference type="Pfam" id="PF06826">
    <property type="entry name" value="Asp-Al_Ex"/>
    <property type="match status" value="2"/>
</dbReference>
<dbReference type="Pfam" id="PF02080">
    <property type="entry name" value="TrkA_C"/>
    <property type="match status" value="2"/>
</dbReference>
<dbReference type="SUPFAM" id="SSF116726">
    <property type="entry name" value="TrkA C-terminal domain-like"/>
    <property type="match status" value="2"/>
</dbReference>
<dbReference type="PROSITE" id="PS51202">
    <property type="entry name" value="RCK_C"/>
    <property type="match status" value="2"/>
</dbReference>